<dbReference type="EC" id="2.1.1.228"/>
<dbReference type="EMBL" id="AE007869">
    <property type="protein sequence ID" value="AAK88421.1"/>
    <property type="molecule type" value="Genomic_DNA"/>
</dbReference>
<dbReference type="PIR" id="AD2908">
    <property type="entry name" value="AD2908"/>
</dbReference>
<dbReference type="PIR" id="D97683">
    <property type="entry name" value="D97683"/>
</dbReference>
<dbReference type="RefSeq" id="NP_355636.1">
    <property type="nucleotide sequence ID" value="NC_003062.2"/>
</dbReference>
<dbReference type="RefSeq" id="WP_010972500.1">
    <property type="nucleotide sequence ID" value="NC_003062.2"/>
</dbReference>
<dbReference type="SMR" id="Q8UBZ7"/>
<dbReference type="STRING" id="176299.Atu2701"/>
<dbReference type="EnsemblBacteria" id="AAK88421">
    <property type="protein sequence ID" value="AAK88421"/>
    <property type="gene ID" value="Atu2701"/>
</dbReference>
<dbReference type="GeneID" id="1134739"/>
<dbReference type="KEGG" id="atu:Atu2701"/>
<dbReference type="PATRIC" id="fig|176299.10.peg.2711"/>
<dbReference type="eggNOG" id="COG0336">
    <property type="taxonomic scope" value="Bacteria"/>
</dbReference>
<dbReference type="HOGENOM" id="CLU_047363_0_1_5"/>
<dbReference type="OrthoDB" id="9807416at2"/>
<dbReference type="PhylomeDB" id="Q8UBZ7"/>
<dbReference type="BioCyc" id="AGRO:ATU2701-MONOMER"/>
<dbReference type="Proteomes" id="UP000000813">
    <property type="component" value="Chromosome circular"/>
</dbReference>
<dbReference type="GO" id="GO:0005829">
    <property type="term" value="C:cytosol"/>
    <property type="evidence" value="ECO:0007669"/>
    <property type="project" value="TreeGrafter"/>
</dbReference>
<dbReference type="GO" id="GO:0052906">
    <property type="term" value="F:tRNA (guanine(37)-N1)-methyltransferase activity"/>
    <property type="evidence" value="ECO:0007669"/>
    <property type="project" value="UniProtKB-UniRule"/>
</dbReference>
<dbReference type="GO" id="GO:0002939">
    <property type="term" value="P:tRNA N1-guanine methylation"/>
    <property type="evidence" value="ECO:0007669"/>
    <property type="project" value="TreeGrafter"/>
</dbReference>
<dbReference type="CDD" id="cd18080">
    <property type="entry name" value="TrmD-like"/>
    <property type="match status" value="1"/>
</dbReference>
<dbReference type="FunFam" id="3.40.1280.10:FF:000001">
    <property type="entry name" value="tRNA (guanine-N(1)-)-methyltransferase"/>
    <property type="match status" value="1"/>
</dbReference>
<dbReference type="Gene3D" id="3.40.1280.10">
    <property type="match status" value="1"/>
</dbReference>
<dbReference type="Gene3D" id="1.10.1270.20">
    <property type="entry name" value="tRNA(m1g37)methyltransferase, domain 2"/>
    <property type="match status" value="1"/>
</dbReference>
<dbReference type="HAMAP" id="MF_00605">
    <property type="entry name" value="TrmD"/>
    <property type="match status" value="1"/>
</dbReference>
<dbReference type="InterPro" id="IPR029028">
    <property type="entry name" value="Alpha/beta_knot_MTases"/>
</dbReference>
<dbReference type="InterPro" id="IPR023148">
    <property type="entry name" value="tRNA_m1G_MeTrfase_C_sf"/>
</dbReference>
<dbReference type="InterPro" id="IPR002649">
    <property type="entry name" value="tRNA_m1G_MeTrfase_TrmD"/>
</dbReference>
<dbReference type="InterPro" id="IPR029026">
    <property type="entry name" value="tRNA_m1G_MTases_N"/>
</dbReference>
<dbReference type="InterPro" id="IPR016009">
    <property type="entry name" value="tRNA_MeTrfase_TRMD/TRM10"/>
</dbReference>
<dbReference type="NCBIfam" id="NF000648">
    <property type="entry name" value="PRK00026.1"/>
    <property type="match status" value="1"/>
</dbReference>
<dbReference type="NCBIfam" id="TIGR00088">
    <property type="entry name" value="trmD"/>
    <property type="match status" value="1"/>
</dbReference>
<dbReference type="PANTHER" id="PTHR46417">
    <property type="entry name" value="TRNA (GUANINE-N(1)-)-METHYLTRANSFERASE"/>
    <property type="match status" value="1"/>
</dbReference>
<dbReference type="PANTHER" id="PTHR46417:SF1">
    <property type="entry name" value="TRNA (GUANINE-N(1)-)-METHYLTRANSFERASE"/>
    <property type="match status" value="1"/>
</dbReference>
<dbReference type="Pfam" id="PF01746">
    <property type="entry name" value="tRNA_m1G_MT"/>
    <property type="match status" value="1"/>
</dbReference>
<dbReference type="PIRSF" id="PIRSF000386">
    <property type="entry name" value="tRNA_mtase"/>
    <property type="match status" value="1"/>
</dbReference>
<dbReference type="SUPFAM" id="SSF75217">
    <property type="entry name" value="alpha/beta knot"/>
    <property type="match status" value="1"/>
</dbReference>
<gene>
    <name type="primary">trmD</name>
    <name type="ordered locus">Atu2701</name>
    <name type="ORF">AGR_C_4898</name>
</gene>
<protein>
    <recommendedName>
        <fullName>tRNA (guanine-N(1)-)-methyltransferase</fullName>
        <ecNumber>2.1.1.228</ecNumber>
    </recommendedName>
    <alternativeName>
        <fullName>M1G-methyltransferase</fullName>
    </alternativeName>
    <alternativeName>
        <fullName>tRNA [GM37] methyltransferase</fullName>
    </alternativeName>
</protein>
<proteinExistence type="inferred from homology"/>
<evidence type="ECO:0000250" key="1"/>
<evidence type="ECO:0000305" key="2"/>
<reference key="1">
    <citation type="journal article" date="2001" name="Science">
        <title>The genome of the natural genetic engineer Agrobacterium tumefaciens C58.</title>
        <authorList>
            <person name="Wood D.W."/>
            <person name="Setubal J.C."/>
            <person name="Kaul R."/>
            <person name="Monks D.E."/>
            <person name="Kitajima J.P."/>
            <person name="Okura V.K."/>
            <person name="Zhou Y."/>
            <person name="Chen L."/>
            <person name="Wood G.E."/>
            <person name="Almeida N.F. Jr."/>
            <person name="Woo L."/>
            <person name="Chen Y."/>
            <person name="Paulsen I.T."/>
            <person name="Eisen J.A."/>
            <person name="Karp P.D."/>
            <person name="Bovee D. Sr."/>
            <person name="Chapman P."/>
            <person name="Clendenning J."/>
            <person name="Deatherage G."/>
            <person name="Gillet W."/>
            <person name="Grant C."/>
            <person name="Kutyavin T."/>
            <person name="Levy R."/>
            <person name="Li M.-J."/>
            <person name="McClelland E."/>
            <person name="Palmieri A."/>
            <person name="Raymond C."/>
            <person name="Rouse G."/>
            <person name="Saenphimmachak C."/>
            <person name="Wu Z."/>
            <person name="Romero P."/>
            <person name="Gordon D."/>
            <person name="Zhang S."/>
            <person name="Yoo H."/>
            <person name="Tao Y."/>
            <person name="Biddle P."/>
            <person name="Jung M."/>
            <person name="Krespan W."/>
            <person name="Perry M."/>
            <person name="Gordon-Kamm B."/>
            <person name="Liao L."/>
            <person name="Kim S."/>
            <person name="Hendrick C."/>
            <person name="Zhao Z.-Y."/>
            <person name="Dolan M."/>
            <person name="Chumley F."/>
            <person name="Tingey S.V."/>
            <person name="Tomb J.-F."/>
            <person name="Gordon M.P."/>
            <person name="Olson M.V."/>
            <person name="Nester E.W."/>
        </authorList>
    </citation>
    <scope>NUCLEOTIDE SEQUENCE [LARGE SCALE GENOMIC DNA]</scope>
    <source>
        <strain>C58 / ATCC 33970</strain>
    </source>
</reference>
<reference key="2">
    <citation type="journal article" date="2001" name="Science">
        <title>Genome sequence of the plant pathogen and biotechnology agent Agrobacterium tumefaciens C58.</title>
        <authorList>
            <person name="Goodner B."/>
            <person name="Hinkle G."/>
            <person name="Gattung S."/>
            <person name="Miller N."/>
            <person name="Blanchard M."/>
            <person name="Qurollo B."/>
            <person name="Goldman B.S."/>
            <person name="Cao Y."/>
            <person name="Askenazi M."/>
            <person name="Halling C."/>
            <person name="Mullin L."/>
            <person name="Houmiel K."/>
            <person name="Gordon J."/>
            <person name="Vaudin M."/>
            <person name="Iartchouk O."/>
            <person name="Epp A."/>
            <person name="Liu F."/>
            <person name="Wollam C."/>
            <person name="Allinger M."/>
            <person name="Doughty D."/>
            <person name="Scott C."/>
            <person name="Lappas C."/>
            <person name="Markelz B."/>
            <person name="Flanagan C."/>
            <person name="Crowell C."/>
            <person name="Gurson J."/>
            <person name="Lomo C."/>
            <person name="Sear C."/>
            <person name="Strub G."/>
            <person name="Cielo C."/>
            <person name="Slater S."/>
        </authorList>
    </citation>
    <scope>NUCLEOTIDE SEQUENCE [LARGE SCALE GENOMIC DNA]</scope>
    <source>
        <strain>C58 / ATCC 33970</strain>
    </source>
</reference>
<feature type="chain" id="PRO_0000060314" description="tRNA (guanine-N(1)-)-methyltransferase">
    <location>
        <begin position="1"/>
        <end position="232"/>
    </location>
</feature>
<feature type="binding site" evidence="1">
    <location>
        <position position="113"/>
    </location>
    <ligand>
        <name>S-adenosyl-L-methionine</name>
        <dbReference type="ChEBI" id="CHEBI:59789"/>
    </ligand>
</feature>
<feature type="binding site" evidence="1">
    <location>
        <begin position="133"/>
        <end position="138"/>
    </location>
    <ligand>
        <name>S-adenosyl-L-methionine</name>
        <dbReference type="ChEBI" id="CHEBI:59789"/>
    </ligand>
</feature>
<sequence>MTFKATVLTLYPEMFPGHLQYSLAGKALERGQWSLDPIQIREFATDRHRSVDDTPAGGGAGMVLKPDVLAAAIDHVSKGDTRPRLLMSPRGKPLSQNRVRELAAGDGAIIVCGRFEGVDQRVIEARGLEEVSIGDYILSGGEPAALTLLDAVVRILPGVMGNDLSGVHESFEGGLLEHPHYTRPQLWEGRDIPAILTSGNHAAIDKWRHEQALALTKERRPDLLEKTQAETK</sequence>
<comment type="function">
    <text evidence="1">Specifically methylates guanosine-37 in various tRNAs.</text>
</comment>
<comment type="catalytic activity">
    <reaction>
        <text>guanosine(37) in tRNA + S-adenosyl-L-methionine = N(1)-methylguanosine(37) in tRNA + S-adenosyl-L-homocysteine + H(+)</text>
        <dbReference type="Rhea" id="RHEA:36899"/>
        <dbReference type="Rhea" id="RHEA-COMP:10145"/>
        <dbReference type="Rhea" id="RHEA-COMP:10147"/>
        <dbReference type="ChEBI" id="CHEBI:15378"/>
        <dbReference type="ChEBI" id="CHEBI:57856"/>
        <dbReference type="ChEBI" id="CHEBI:59789"/>
        <dbReference type="ChEBI" id="CHEBI:73542"/>
        <dbReference type="ChEBI" id="CHEBI:74269"/>
        <dbReference type="EC" id="2.1.1.228"/>
    </reaction>
</comment>
<comment type="subunit">
    <text evidence="1">Homodimer.</text>
</comment>
<comment type="subcellular location">
    <subcellularLocation>
        <location evidence="2">Cytoplasm</location>
    </subcellularLocation>
</comment>
<comment type="similarity">
    <text evidence="2">Belongs to the RNA methyltransferase TrmD family.</text>
</comment>
<accession>Q8UBZ7</accession>
<name>TRMD_AGRFC</name>
<keyword id="KW-0963">Cytoplasm</keyword>
<keyword id="KW-0489">Methyltransferase</keyword>
<keyword id="KW-1185">Reference proteome</keyword>
<keyword id="KW-0949">S-adenosyl-L-methionine</keyword>
<keyword id="KW-0808">Transferase</keyword>
<keyword id="KW-0819">tRNA processing</keyword>
<organism>
    <name type="scientific">Agrobacterium fabrum (strain C58 / ATCC 33970)</name>
    <name type="common">Agrobacterium tumefaciens (strain C58)</name>
    <dbReference type="NCBI Taxonomy" id="176299"/>
    <lineage>
        <taxon>Bacteria</taxon>
        <taxon>Pseudomonadati</taxon>
        <taxon>Pseudomonadota</taxon>
        <taxon>Alphaproteobacteria</taxon>
        <taxon>Hyphomicrobiales</taxon>
        <taxon>Rhizobiaceae</taxon>
        <taxon>Rhizobium/Agrobacterium group</taxon>
        <taxon>Agrobacterium</taxon>
        <taxon>Agrobacterium tumefaciens complex</taxon>
    </lineage>
</organism>